<dbReference type="EC" id="2.1.3.2" evidence="1"/>
<dbReference type="EMBL" id="CP000088">
    <property type="protein sequence ID" value="AAZ55092.1"/>
    <property type="molecule type" value="Genomic_DNA"/>
</dbReference>
<dbReference type="RefSeq" id="WP_011291501.1">
    <property type="nucleotide sequence ID" value="NC_007333.1"/>
</dbReference>
<dbReference type="SMR" id="Q47R25"/>
<dbReference type="STRING" id="269800.Tfu_1054"/>
<dbReference type="KEGG" id="tfu:Tfu_1054"/>
<dbReference type="eggNOG" id="COG0540">
    <property type="taxonomic scope" value="Bacteria"/>
</dbReference>
<dbReference type="HOGENOM" id="CLU_043846_2_0_11"/>
<dbReference type="OrthoDB" id="9774690at2"/>
<dbReference type="UniPathway" id="UPA00070">
    <property type="reaction ID" value="UER00116"/>
</dbReference>
<dbReference type="GO" id="GO:0005829">
    <property type="term" value="C:cytosol"/>
    <property type="evidence" value="ECO:0007669"/>
    <property type="project" value="TreeGrafter"/>
</dbReference>
<dbReference type="GO" id="GO:0016597">
    <property type="term" value="F:amino acid binding"/>
    <property type="evidence" value="ECO:0007669"/>
    <property type="project" value="InterPro"/>
</dbReference>
<dbReference type="GO" id="GO:0004070">
    <property type="term" value="F:aspartate carbamoyltransferase activity"/>
    <property type="evidence" value="ECO:0007669"/>
    <property type="project" value="UniProtKB-UniRule"/>
</dbReference>
<dbReference type="GO" id="GO:0006207">
    <property type="term" value="P:'de novo' pyrimidine nucleobase biosynthetic process"/>
    <property type="evidence" value="ECO:0007669"/>
    <property type="project" value="InterPro"/>
</dbReference>
<dbReference type="GO" id="GO:0044205">
    <property type="term" value="P:'de novo' UMP biosynthetic process"/>
    <property type="evidence" value="ECO:0007669"/>
    <property type="project" value="UniProtKB-UniRule"/>
</dbReference>
<dbReference type="GO" id="GO:0006520">
    <property type="term" value="P:amino acid metabolic process"/>
    <property type="evidence" value="ECO:0007669"/>
    <property type="project" value="InterPro"/>
</dbReference>
<dbReference type="FunFam" id="3.40.50.1370:FF:000007">
    <property type="entry name" value="Aspartate carbamoyltransferase"/>
    <property type="match status" value="1"/>
</dbReference>
<dbReference type="FunFam" id="3.40.50.1370:FF:000012">
    <property type="entry name" value="Aspartate carbamoyltransferase"/>
    <property type="match status" value="1"/>
</dbReference>
<dbReference type="Gene3D" id="3.40.50.1370">
    <property type="entry name" value="Aspartate/ornithine carbamoyltransferase"/>
    <property type="match status" value="2"/>
</dbReference>
<dbReference type="HAMAP" id="MF_00001">
    <property type="entry name" value="Asp_carb_tr"/>
    <property type="match status" value="1"/>
</dbReference>
<dbReference type="InterPro" id="IPR006132">
    <property type="entry name" value="Asp/Orn_carbamoyltranf_P-bd"/>
</dbReference>
<dbReference type="InterPro" id="IPR006130">
    <property type="entry name" value="Asp/Orn_carbamoylTrfase"/>
</dbReference>
<dbReference type="InterPro" id="IPR036901">
    <property type="entry name" value="Asp/Orn_carbamoylTrfase_sf"/>
</dbReference>
<dbReference type="InterPro" id="IPR002082">
    <property type="entry name" value="Asp_carbamoyltransf"/>
</dbReference>
<dbReference type="InterPro" id="IPR006131">
    <property type="entry name" value="Asp_carbamoyltransf_Asp/Orn-bd"/>
</dbReference>
<dbReference type="NCBIfam" id="TIGR00670">
    <property type="entry name" value="asp_carb_tr"/>
    <property type="match status" value="1"/>
</dbReference>
<dbReference type="NCBIfam" id="NF002032">
    <property type="entry name" value="PRK00856.1"/>
    <property type="match status" value="1"/>
</dbReference>
<dbReference type="PANTHER" id="PTHR45753:SF6">
    <property type="entry name" value="ASPARTATE CARBAMOYLTRANSFERASE"/>
    <property type="match status" value="1"/>
</dbReference>
<dbReference type="PANTHER" id="PTHR45753">
    <property type="entry name" value="ORNITHINE CARBAMOYLTRANSFERASE, MITOCHONDRIAL"/>
    <property type="match status" value="1"/>
</dbReference>
<dbReference type="Pfam" id="PF00185">
    <property type="entry name" value="OTCace"/>
    <property type="match status" value="1"/>
</dbReference>
<dbReference type="Pfam" id="PF02729">
    <property type="entry name" value="OTCace_N"/>
    <property type="match status" value="1"/>
</dbReference>
<dbReference type="PRINTS" id="PR00100">
    <property type="entry name" value="AOTCASE"/>
</dbReference>
<dbReference type="PRINTS" id="PR00101">
    <property type="entry name" value="ATCASE"/>
</dbReference>
<dbReference type="SUPFAM" id="SSF53671">
    <property type="entry name" value="Aspartate/ornithine carbamoyltransferase"/>
    <property type="match status" value="1"/>
</dbReference>
<dbReference type="PROSITE" id="PS00097">
    <property type="entry name" value="CARBAMOYLTRANSFERASE"/>
    <property type="match status" value="1"/>
</dbReference>
<comment type="function">
    <text evidence="1">Catalyzes the condensation of carbamoyl phosphate and aspartate to form carbamoyl aspartate and inorganic phosphate, the committed step in the de novo pyrimidine nucleotide biosynthesis pathway.</text>
</comment>
<comment type="catalytic activity">
    <reaction evidence="1">
        <text>carbamoyl phosphate + L-aspartate = N-carbamoyl-L-aspartate + phosphate + H(+)</text>
        <dbReference type="Rhea" id="RHEA:20013"/>
        <dbReference type="ChEBI" id="CHEBI:15378"/>
        <dbReference type="ChEBI" id="CHEBI:29991"/>
        <dbReference type="ChEBI" id="CHEBI:32814"/>
        <dbReference type="ChEBI" id="CHEBI:43474"/>
        <dbReference type="ChEBI" id="CHEBI:58228"/>
        <dbReference type="EC" id="2.1.3.2"/>
    </reaction>
</comment>
<comment type="pathway">
    <text evidence="1">Pyrimidine metabolism; UMP biosynthesis via de novo pathway; (S)-dihydroorotate from bicarbonate: step 2/3.</text>
</comment>
<comment type="subunit">
    <text evidence="1">Heterododecamer (2C3:3R2) of six catalytic PyrB chains organized as two trimers (C3), and six regulatory PyrI chains organized as three dimers (R2).</text>
</comment>
<comment type="similarity">
    <text evidence="1">Belongs to the aspartate/ornithine carbamoyltransferase superfamily. ATCase family.</text>
</comment>
<feature type="chain" id="PRO_0000301635" description="Aspartate carbamoyltransferase catalytic subunit">
    <location>
        <begin position="1"/>
        <end position="313"/>
    </location>
</feature>
<feature type="binding site" evidence="1">
    <location>
        <position position="54"/>
    </location>
    <ligand>
        <name>carbamoyl phosphate</name>
        <dbReference type="ChEBI" id="CHEBI:58228"/>
    </ligand>
</feature>
<feature type="binding site" evidence="1">
    <location>
        <position position="55"/>
    </location>
    <ligand>
        <name>carbamoyl phosphate</name>
        <dbReference type="ChEBI" id="CHEBI:58228"/>
    </ligand>
</feature>
<feature type="binding site" evidence="1">
    <location>
        <position position="82"/>
    </location>
    <ligand>
        <name>L-aspartate</name>
        <dbReference type="ChEBI" id="CHEBI:29991"/>
    </ligand>
</feature>
<feature type="binding site" evidence="1">
    <location>
        <position position="104"/>
    </location>
    <ligand>
        <name>carbamoyl phosphate</name>
        <dbReference type="ChEBI" id="CHEBI:58228"/>
    </ligand>
</feature>
<feature type="binding site" evidence="1">
    <location>
        <position position="132"/>
    </location>
    <ligand>
        <name>carbamoyl phosphate</name>
        <dbReference type="ChEBI" id="CHEBI:58228"/>
    </ligand>
</feature>
<feature type="binding site" evidence="1">
    <location>
        <position position="135"/>
    </location>
    <ligand>
        <name>carbamoyl phosphate</name>
        <dbReference type="ChEBI" id="CHEBI:58228"/>
    </ligand>
</feature>
<feature type="binding site" evidence="1">
    <location>
        <position position="165"/>
    </location>
    <ligand>
        <name>L-aspartate</name>
        <dbReference type="ChEBI" id="CHEBI:29991"/>
    </ligand>
</feature>
<feature type="binding site" evidence="1">
    <location>
        <position position="219"/>
    </location>
    <ligand>
        <name>L-aspartate</name>
        <dbReference type="ChEBI" id="CHEBI:29991"/>
    </ligand>
</feature>
<feature type="binding site" evidence="1">
    <location>
        <position position="260"/>
    </location>
    <ligand>
        <name>carbamoyl phosphate</name>
        <dbReference type="ChEBI" id="CHEBI:58228"/>
    </ligand>
</feature>
<feature type="binding site" evidence="1">
    <location>
        <position position="261"/>
    </location>
    <ligand>
        <name>carbamoyl phosphate</name>
        <dbReference type="ChEBI" id="CHEBI:58228"/>
    </ligand>
</feature>
<name>PYRB_THEFY</name>
<sequence length="313" mass="34076">MQHLLSAGDLTRDEALLILDTARELSQVSERSVKKLPTLRGRTVVNLFYEDSTRTRISFEAAAKRMSADVINFSARGSSVSKGESLKDTALTLQAMGADGVVIRHSAPGAARRLADWVDGVVINAGDGTHEHPTQALLDAYTMRERLGRVEGLRVAIVGDIRHSRVARSNVLLLTTLGAEVTLVAPPTLLPVSVDTWPCAVSYDLDEVLPKSDVVMMLRVQAERMHSSFFPSAREYSRRYGLDADRLARMADHAIVMHPGPMVRGMEISAEVADSARSTVTEQVTNGVSVRMAVLYLLLGGAIHRPGNQGEPR</sequence>
<keyword id="KW-0665">Pyrimidine biosynthesis</keyword>
<keyword id="KW-0808">Transferase</keyword>
<accession>Q47R25</accession>
<evidence type="ECO:0000255" key="1">
    <source>
        <dbReference type="HAMAP-Rule" id="MF_00001"/>
    </source>
</evidence>
<gene>
    <name evidence="1" type="primary">pyrB</name>
    <name type="ordered locus">Tfu_1054</name>
</gene>
<reference key="1">
    <citation type="journal article" date="2007" name="J. Bacteriol.">
        <title>Genome sequence and analysis of the soil cellulolytic actinomycete Thermobifida fusca YX.</title>
        <authorList>
            <person name="Lykidis A."/>
            <person name="Mavromatis K."/>
            <person name="Ivanova N."/>
            <person name="Anderson I."/>
            <person name="Land M."/>
            <person name="DiBartolo G."/>
            <person name="Martinez M."/>
            <person name="Lapidus A."/>
            <person name="Lucas S."/>
            <person name="Copeland A."/>
            <person name="Richardson P."/>
            <person name="Wilson D.B."/>
            <person name="Kyrpides N."/>
        </authorList>
    </citation>
    <scope>NUCLEOTIDE SEQUENCE [LARGE SCALE GENOMIC DNA]</scope>
    <source>
        <strain>YX</strain>
    </source>
</reference>
<organism>
    <name type="scientific">Thermobifida fusca (strain YX)</name>
    <dbReference type="NCBI Taxonomy" id="269800"/>
    <lineage>
        <taxon>Bacteria</taxon>
        <taxon>Bacillati</taxon>
        <taxon>Actinomycetota</taxon>
        <taxon>Actinomycetes</taxon>
        <taxon>Streptosporangiales</taxon>
        <taxon>Nocardiopsidaceae</taxon>
        <taxon>Thermobifida</taxon>
    </lineage>
</organism>
<proteinExistence type="inferred from homology"/>
<protein>
    <recommendedName>
        <fullName evidence="1">Aspartate carbamoyltransferase catalytic subunit</fullName>
        <ecNumber evidence="1">2.1.3.2</ecNumber>
    </recommendedName>
    <alternativeName>
        <fullName evidence="1">Aspartate transcarbamylase</fullName>
        <shortName evidence="1">ATCase</shortName>
    </alternativeName>
</protein>